<name>LSPA_BARHE</name>
<comment type="function">
    <text evidence="1">This protein specifically catalyzes the removal of signal peptides from prolipoproteins.</text>
</comment>
<comment type="catalytic activity">
    <reaction evidence="1">
        <text>Release of signal peptides from bacterial membrane prolipoproteins. Hydrolyzes -Xaa-Yaa-Zaa-|-(S,diacylglyceryl)Cys-, in which Xaa is hydrophobic (preferably Leu), and Yaa (Ala or Ser) and Zaa (Gly or Ala) have small, neutral side chains.</text>
        <dbReference type="EC" id="3.4.23.36"/>
    </reaction>
</comment>
<comment type="pathway">
    <text evidence="1">Protein modification; lipoprotein biosynthesis (signal peptide cleavage).</text>
</comment>
<comment type="subcellular location">
    <subcellularLocation>
        <location evidence="1">Cell inner membrane</location>
        <topology evidence="1">Multi-pass membrane protein</topology>
    </subcellularLocation>
</comment>
<comment type="similarity">
    <text evidence="1">Belongs to the peptidase A8 family.</text>
</comment>
<gene>
    <name evidence="1" type="primary">lspA</name>
    <name type="ordered locus">BH00100</name>
</gene>
<protein>
    <recommendedName>
        <fullName evidence="1">Lipoprotein signal peptidase</fullName>
        <ecNumber evidence="1">3.4.23.36</ecNumber>
    </recommendedName>
    <alternativeName>
        <fullName evidence="1">Prolipoprotein signal peptidase</fullName>
    </alternativeName>
    <alternativeName>
        <fullName evidence="1">Signal peptidase II</fullName>
        <shortName evidence="1">SPase II</shortName>
    </alternativeName>
</protein>
<keyword id="KW-0064">Aspartyl protease</keyword>
<keyword id="KW-0997">Cell inner membrane</keyword>
<keyword id="KW-1003">Cell membrane</keyword>
<keyword id="KW-0378">Hydrolase</keyword>
<keyword id="KW-0472">Membrane</keyword>
<keyword id="KW-0645">Protease</keyword>
<keyword id="KW-0812">Transmembrane</keyword>
<keyword id="KW-1133">Transmembrane helix</keyword>
<organism>
    <name type="scientific">Bartonella henselae (strain ATCC 49882 / DSM 28221 / CCUG 30454 / Houston 1)</name>
    <name type="common">Rochalimaea henselae</name>
    <dbReference type="NCBI Taxonomy" id="283166"/>
    <lineage>
        <taxon>Bacteria</taxon>
        <taxon>Pseudomonadati</taxon>
        <taxon>Pseudomonadota</taxon>
        <taxon>Alphaproteobacteria</taxon>
        <taxon>Hyphomicrobiales</taxon>
        <taxon>Bartonellaceae</taxon>
        <taxon>Bartonella</taxon>
    </lineage>
</organism>
<accession>Q6G5A2</accession>
<feature type="chain" id="PRO_1000058230" description="Lipoprotein signal peptidase">
    <location>
        <begin position="1"/>
        <end position="163"/>
    </location>
</feature>
<feature type="transmembrane region" description="Helical" evidence="1">
    <location>
        <begin position="8"/>
        <end position="28"/>
    </location>
</feature>
<feature type="transmembrane region" description="Helical" evidence="1">
    <location>
        <begin position="61"/>
        <end position="81"/>
    </location>
</feature>
<feature type="transmembrane region" description="Helical" evidence="1">
    <location>
        <begin position="93"/>
        <end position="113"/>
    </location>
</feature>
<feature type="transmembrane region" description="Helical" evidence="1">
    <location>
        <begin position="128"/>
        <end position="148"/>
    </location>
</feature>
<feature type="active site" evidence="1">
    <location>
        <position position="117"/>
    </location>
</feature>
<feature type="active site" evidence="1">
    <location>
        <position position="136"/>
    </location>
</feature>
<reference key="1">
    <citation type="journal article" date="2004" name="Proc. Natl. Acad. Sci. U.S.A.">
        <title>The louse-borne human pathogen Bartonella quintana is a genomic derivative of the zoonotic agent Bartonella henselae.</title>
        <authorList>
            <person name="Alsmark U.C.M."/>
            <person name="Frank A.C."/>
            <person name="Karlberg E.O."/>
            <person name="Legault B.-A."/>
            <person name="Ardell D.H."/>
            <person name="Canbaeck B."/>
            <person name="Eriksson A.-S."/>
            <person name="Naeslund A.K."/>
            <person name="Handley S.A."/>
            <person name="Huvet M."/>
            <person name="La Scola B."/>
            <person name="Holmberg M."/>
            <person name="Andersson S.G.E."/>
        </authorList>
    </citation>
    <scope>NUCLEOTIDE SEQUENCE [LARGE SCALE GENOMIC DNA]</scope>
    <source>
        <strain>ATCC 49882 / DSM 28221 / CCUG 30454 / Houston 1</strain>
    </source>
</reference>
<sequence length="163" mass="18979">MTRKSFPFFLLGLILTVGIDQAVKYWVMHNIPLGTETPLLPFLSLYHVRNSGIAFSFFSSFSHWGLIFLTLIILIFLLWLWKNTQYNKSLTRFGFTLIIGGAIGNLIDRICFYYVIDYILFYINDVFYFAVFNLADTFITLGVIAIIIEELLSWIKRKSTFSE</sequence>
<dbReference type="EC" id="3.4.23.36" evidence="1"/>
<dbReference type="EMBL" id="BX897699">
    <property type="protein sequence ID" value="CAF26826.1"/>
    <property type="molecule type" value="Genomic_DNA"/>
</dbReference>
<dbReference type="RefSeq" id="WP_011179980.1">
    <property type="nucleotide sequence ID" value="NZ_LRIJ02000001.1"/>
</dbReference>
<dbReference type="SMR" id="Q6G5A2"/>
<dbReference type="PaxDb" id="283166-BH00100"/>
<dbReference type="EnsemblBacteria" id="CAF26826">
    <property type="protein sequence ID" value="CAF26826"/>
    <property type="gene ID" value="BH00100"/>
</dbReference>
<dbReference type="GeneID" id="92986299"/>
<dbReference type="KEGG" id="bhe:BH00100"/>
<dbReference type="eggNOG" id="COG0597">
    <property type="taxonomic scope" value="Bacteria"/>
</dbReference>
<dbReference type="OrthoDB" id="9810259at2"/>
<dbReference type="UniPathway" id="UPA00665"/>
<dbReference type="Proteomes" id="UP000000421">
    <property type="component" value="Chromosome"/>
</dbReference>
<dbReference type="GO" id="GO:0005886">
    <property type="term" value="C:plasma membrane"/>
    <property type="evidence" value="ECO:0007669"/>
    <property type="project" value="UniProtKB-SubCell"/>
</dbReference>
<dbReference type="GO" id="GO:0004190">
    <property type="term" value="F:aspartic-type endopeptidase activity"/>
    <property type="evidence" value="ECO:0007669"/>
    <property type="project" value="UniProtKB-UniRule"/>
</dbReference>
<dbReference type="GO" id="GO:0006508">
    <property type="term" value="P:proteolysis"/>
    <property type="evidence" value="ECO:0007669"/>
    <property type="project" value="UniProtKB-KW"/>
</dbReference>
<dbReference type="HAMAP" id="MF_00161">
    <property type="entry name" value="LspA"/>
    <property type="match status" value="1"/>
</dbReference>
<dbReference type="InterPro" id="IPR001872">
    <property type="entry name" value="Peptidase_A8"/>
</dbReference>
<dbReference type="NCBIfam" id="TIGR00077">
    <property type="entry name" value="lspA"/>
    <property type="match status" value="1"/>
</dbReference>
<dbReference type="PANTHER" id="PTHR33695">
    <property type="entry name" value="LIPOPROTEIN SIGNAL PEPTIDASE"/>
    <property type="match status" value="1"/>
</dbReference>
<dbReference type="PANTHER" id="PTHR33695:SF1">
    <property type="entry name" value="LIPOPROTEIN SIGNAL PEPTIDASE"/>
    <property type="match status" value="1"/>
</dbReference>
<dbReference type="Pfam" id="PF01252">
    <property type="entry name" value="Peptidase_A8"/>
    <property type="match status" value="1"/>
</dbReference>
<dbReference type="PRINTS" id="PR00781">
    <property type="entry name" value="LIPOSIGPTASE"/>
</dbReference>
<dbReference type="PROSITE" id="PS00855">
    <property type="entry name" value="SPASE_II"/>
    <property type="match status" value="1"/>
</dbReference>
<proteinExistence type="inferred from homology"/>
<evidence type="ECO:0000255" key="1">
    <source>
        <dbReference type="HAMAP-Rule" id="MF_00161"/>
    </source>
</evidence>